<comment type="function">
    <text evidence="1">Reversibly transfers an adenylyl group from ATP to 4'-phosphopantetheine, yielding dephospho-CoA (dPCoA) and pyrophosphate.</text>
</comment>
<comment type="catalytic activity">
    <reaction evidence="1">
        <text>(R)-4'-phosphopantetheine + ATP + H(+) = 3'-dephospho-CoA + diphosphate</text>
        <dbReference type="Rhea" id="RHEA:19801"/>
        <dbReference type="ChEBI" id="CHEBI:15378"/>
        <dbReference type="ChEBI" id="CHEBI:30616"/>
        <dbReference type="ChEBI" id="CHEBI:33019"/>
        <dbReference type="ChEBI" id="CHEBI:57328"/>
        <dbReference type="ChEBI" id="CHEBI:61723"/>
        <dbReference type="EC" id="2.7.7.3"/>
    </reaction>
</comment>
<comment type="cofactor">
    <cofactor evidence="1">
        <name>Mg(2+)</name>
        <dbReference type="ChEBI" id="CHEBI:18420"/>
    </cofactor>
</comment>
<comment type="pathway">
    <text evidence="1">Cofactor biosynthesis; coenzyme A biosynthesis; CoA from (R)-pantothenate: step 4/5.</text>
</comment>
<comment type="subunit">
    <text evidence="1">Homohexamer.</text>
</comment>
<comment type="subcellular location">
    <subcellularLocation>
        <location evidence="1">Cytoplasm</location>
    </subcellularLocation>
</comment>
<comment type="similarity">
    <text evidence="1">Belongs to the bacterial CoaD family.</text>
</comment>
<sequence>MSKVAIYPGTFDPITNGHVDLVDRALNIFDRIVVAVSTAYGKKTLFDLDTRELMIKEVFKDNDRVKVVSFEGLLVDTAVKHGACAIVRGLRAVSDFDYEFQMSSMNNKLNSDIQTIFLTPSEKFSCISSTLVRAVAIHNYQRVGEFVPECVFDRIELKYSKD</sequence>
<protein>
    <recommendedName>
        <fullName evidence="1">Phosphopantetheine adenylyltransferase</fullName>
        <ecNumber evidence="1">2.7.7.3</ecNumber>
    </recommendedName>
    <alternativeName>
        <fullName evidence="1">Dephospho-CoA pyrophosphorylase</fullName>
    </alternativeName>
    <alternativeName>
        <fullName evidence="1">Pantetheine-phosphate adenylyltransferase</fullName>
        <shortName evidence="1">PPAT</shortName>
    </alternativeName>
</protein>
<feature type="chain" id="PRO_1000076767" description="Phosphopantetheine adenylyltransferase">
    <location>
        <begin position="1"/>
        <end position="162"/>
    </location>
</feature>
<feature type="binding site" evidence="1">
    <location>
        <begin position="10"/>
        <end position="11"/>
    </location>
    <ligand>
        <name>ATP</name>
        <dbReference type="ChEBI" id="CHEBI:30616"/>
    </ligand>
</feature>
<feature type="binding site" evidence="1">
    <location>
        <position position="10"/>
    </location>
    <ligand>
        <name>substrate</name>
    </ligand>
</feature>
<feature type="binding site" evidence="1">
    <location>
        <position position="18"/>
    </location>
    <ligand>
        <name>ATP</name>
        <dbReference type="ChEBI" id="CHEBI:30616"/>
    </ligand>
</feature>
<feature type="binding site" evidence="1">
    <location>
        <position position="42"/>
    </location>
    <ligand>
        <name>substrate</name>
    </ligand>
</feature>
<feature type="binding site" evidence="1">
    <location>
        <position position="74"/>
    </location>
    <ligand>
        <name>substrate</name>
    </ligand>
</feature>
<feature type="binding site" evidence="1">
    <location>
        <position position="88"/>
    </location>
    <ligand>
        <name>substrate</name>
    </ligand>
</feature>
<feature type="binding site" evidence="1">
    <location>
        <begin position="89"/>
        <end position="91"/>
    </location>
    <ligand>
        <name>ATP</name>
        <dbReference type="ChEBI" id="CHEBI:30616"/>
    </ligand>
</feature>
<feature type="binding site" evidence="1">
    <location>
        <position position="99"/>
    </location>
    <ligand>
        <name>ATP</name>
        <dbReference type="ChEBI" id="CHEBI:30616"/>
    </ligand>
</feature>
<feature type="binding site" evidence="1">
    <location>
        <begin position="124"/>
        <end position="130"/>
    </location>
    <ligand>
        <name>ATP</name>
        <dbReference type="ChEBI" id="CHEBI:30616"/>
    </ligand>
</feature>
<feature type="site" description="Transition state stabilizer" evidence="1">
    <location>
        <position position="18"/>
    </location>
</feature>
<gene>
    <name evidence="1" type="primary">coaD</name>
    <name type="ordered locus">Fphi_0122</name>
</gene>
<name>COAD_FRAP2</name>
<evidence type="ECO:0000255" key="1">
    <source>
        <dbReference type="HAMAP-Rule" id="MF_00151"/>
    </source>
</evidence>
<dbReference type="EC" id="2.7.7.3" evidence="1"/>
<dbReference type="EMBL" id="CP000937">
    <property type="protein sequence ID" value="ABZ86343.1"/>
    <property type="molecule type" value="Genomic_DNA"/>
</dbReference>
<dbReference type="SMR" id="B0TYA1"/>
<dbReference type="KEGG" id="fph:Fphi_0122"/>
<dbReference type="eggNOG" id="COG0669">
    <property type="taxonomic scope" value="Bacteria"/>
</dbReference>
<dbReference type="HOGENOM" id="CLU_100149_0_1_6"/>
<dbReference type="UniPathway" id="UPA00241">
    <property type="reaction ID" value="UER00355"/>
</dbReference>
<dbReference type="GO" id="GO:0005737">
    <property type="term" value="C:cytoplasm"/>
    <property type="evidence" value="ECO:0007669"/>
    <property type="project" value="UniProtKB-SubCell"/>
</dbReference>
<dbReference type="GO" id="GO:0005524">
    <property type="term" value="F:ATP binding"/>
    <property type="evidence" value="ECO:0007669"/>
    <property type="project" value="UniProtKB-KW"/>
</dbReference>
<dbReference type="GO" id="GO:0004595">
    <property type="term" value="F:pantetheine-phosphate adenylyltransferase activity"/>
    <property type="evidence" value="ECO:0007669"/>
    <property type="project" value="UniProtKB-UniRule"/>
</dbReference>
<dbReference type="GO" id="GO:0015937">
    <property type="term" value="P:coenzyme A biosynthetic process"/>
    <property type="evidence" value="ECO:0007669"/>
    <property type="project" value="UniProtKB-UniRule"/>
</dbReference>
<dbReference type="CDD" id="cd02163">
    <property type="entry name" value="PPAT"/>
    <property type="match status" value="1"/>
</dbReference>
<dbReference type="Gene3D" id="3.40.50.620">
    <property type="entry name" value="HUPs"/>
    <property type="match status" value="1"/>
</dbReference>
<dbReference type="HAMAP" id="MF_00151">
    <property type="entry name" value="PPAT_bact"/>
    <property type="match status" value="1"/>
</dbReference>
<dbReference type="InterPro" id="IPR004821">
    <property type="entry name" value="Cyt_trans-like"/>
</dbReference>
<dbReference type="InterPro" id="IPR001980">
    <property type="entry name" value="PPAT"/>
</dbReference>
<dbReference type="InterPro" id="IPR014729">
    <property type="entry name" value="Rossmann-like_a/b/a_fold"/>
</dbReference>
<dbReference type="NCBIfam" id="TIGR01510">
    <property type="entry name" value="coaD_prev_kdtB"/>
    <property type="match status" value="1"/>
</dbReference>
<dbReference type="NCBIfam" id="TIGR00125">
    <property type="entry name" value="cyt_tran_rel"/>
    <property type="match status" value="1"/>
</dbReference>
<dbReference type="PANTHER" id="PTHR21342">
    <property type="entry name" value="PHOSPHOPANTETHEINE ADENYLYLTRANSFERASE"/>
    <property type="match status" value="1"/>
</dbReference>
<dbReference type="PANTHER" id="PTHR21342:SF1">
    <property type="entry name" value="PHOSPHOPANTETHEINE ADENYLYLTRANSFERASE"/>
    <property type="match status" value="1"/>
</dbReference>
<dbReference type="Pfam" id="PF01467">
    <property type="entry name" value="CTP_transf_like"/>
    <property type="match status" value="1"/>
</dbReference>
<dbReference type="PRINTS" id="PR01020">
    <property type="entry name" value="LPSBIOSNTHSS"/>
</dbReference>
<dbReference type="SUPFAM" id="SSF52374">
    <property type="entry name" value="Nucleotidylyl transferase"/>
    <property type="match status" value="1"/>
</dbReference>
<organism>
    <name type="scientific">Francisella philomiragia subsp. philomiragia (strain ATCC 25017 / CCUG 19701 / FSC 153 / O#319-036)</name>
    <dbReference type="NCBI Taxonomy" id="484022"/>
    <lineage>
        <taxon>Bacteria</taxon>
        <taxon>Pseudomonadati</taxon>
        <taxon>Pseudomonadota</taxon>
        <taxon>Gammaproteobacteria</taxon>
        <taxon>Thiotrichales</taxon>
        <taxon>Francisellaceae</taxon>
        <taxon>Francisella</taxon>
    </lineage>
</organism>
<keyword id="KW-0067">ATP-binding</keyword>
<keyword id="KW-0173">Coenzyme A biosynthesis</keyword>
<keyword id="KW-0963">Cytoplasm</keyword>
<keyword id="KW-0460">Magnesium</keyword>
<keyword id="KW-0547">Nucleotide-binding</keyword>
<keyword id="KW-0548">Nucleotidyltransferase</keyword>
<keyword id="KW-0808">Transferase</keyword>
<accession>B0TYA1</accession>
<reference key="1">
    <citation type="submission" date="2007-12" db="EMBL/GenBank/DDBJ databases">
        <title>Complete sequence of chromosome of Francisella philomiragia subsp. philomiragia ATCC 25017.</title>
        <authorList>
            <consortium name="US DOE Joint Genome Institute"/>
            <person name="Copeland A."/>
            <person name="Lucas S."/>
            <person name="Lapidus A."/>
            <person name="Barry K."/>
            <person name="Detter J.C."/>
            <person name="Glavina del Rio T."/>
            <person name="Hammon N."/>
            <person name="Israni S."/>
            <person name="Dalin E."/>
            <person name="Tice H."/>
            <person name="Pitluck S."/>
            <person name="Chain P."/>
            <person name="Malfatti S."/>
            <person name="Shin M."/>
            <person name="Vergez L."/>
            <person name="Schmutz J."/>
            <person name="Larimer F."/>
            <person name="Land M."/>
            <person name="Hauser L."/>
            <person name="Richardson P."/>
        </authorList>
    </citation>
    <scope>NUCLEOTIDE SEQUENCE [LARGE SCALE GENOMIC DNA]</scope>
    <source>
        <strain>ATCC 25017 / CCUG 19701 / FSC 153 / O#319-036</strain>
    </source>
</reference>
<proteinExistence type="inferred from homology"/>